<reference key="1">
    <citation type="submission" date="2010-12" db="EMBL/GenBank/DDBJ databases">
        <title>The Genome Sequence of Clostridium symbiosum strain WAL-14163.</title>
        <authorList>
            <person name="Earl A."/>
            <person name="Ward D."/>
            <person name="Feldgarden M."/>
            <person name="Gevers D."/>
            <person name="Finegold S.M."/>
            <person name="Summanen P.H."/>
            <person name="Molitoris D.R."/>
            <person name="Vaisanen M.L."/>
            <person name="Daigneault M."/>
            <person name="Young S.K."/>
            <person name="Zeng Q."/>
            <person name="Gargeya S."/>
            <person name="Fitzgerald M."/>
            <person name="Haas B."/>
            <person name="Abouelleil A."/>
            <person name="Alvarado L."/>
            <person name="Arachchi H.M."/>
            <person name="Berlin A."/>
            <person name="Brown A."/>
            <person name="Chapman S.B."/>
            <person name="Chen Z."/>
            <person name="Dunbar C."/>
            <person name="Freedman E."/>
            <person name="Gearin G."/>
            <person name="Gellesch M."/>
            <person name="Goldberg J."/>
            <person name="Griggs A."/>
            <person name="Gujja S."/>
            <person name="Heilman E."/>
            <person name="Heiman D."/>
            <person name="Howarth C."/>
            <person name="Larson L."/>
            <person name="Lui A."/>
            <person name="MacDonald P.J.P."/>
            <person name="Mehta T."/>
            <person name="Montmayeur A."/>
            <person name="Murphy C."/>
            <person name="Neiman D."/>
            <person name="Pearson M."/>
            <person name="Priest M."/>
            <person name="Roberts A."/>
            <person name="Saif S."/>
            <person name="Shea T."/>
            <person name="Shenoy N."/>
            <person name="Sisk P."/>
            <person name="Stolte C."/>
            <person name="Sykes S."/>
            <person name="White J."/>
            <person name="Yandava C."/>
            <person name="Nusbaum C."/>
            <person name="Birren B."/>
        </authorList>
    </citation>
    <scope>NUCLEOTIDE SEQUENCE [LARGE SCALE GENOMIC DNA]</scope>
    <source>
        <strain>WAL-14163</strain>
    </source>
</reference>
<reference key="2">
    <citation type="journal article" date="2024" name="Nat. Microbiol.">
        <title>BilR is a gut microbial enzyme that reduces bilirubin to urobilinogen.</title>
        <authorList>
            <person name="Hall B."/>
            <person name="Levy S."/>
            <person name="Dufault-Thompson K."/>
            <person name="Arp G."/>
            <person name="Zhong A."/>
            <person name="Ndjite G.M."/>
            <person name="Weiss A."/>
            <person name="Braccia D."/>
            <person name="Jenkins C."/>
            <person name="Grant M.R."/>
            <person name="Abeysinghe S."/>
            <person name="Yang Y."/>
            <person name="Jermain M.D."/>
            <person name="Wu C.H."/>
            <person name="Ma B."/>
            <person name="Jiang X."/>
        </authorList>
    </citation>
    <scope>FUNCTION</scope>
    <scope>PATHWAY</scope>
</reference>
<evidence type="ECO:0000269" key="1">
    <source>
    </source>
</evidence>
<evidence type="ECO:0000303" key="2">
    <source>
    </source>
</evidence>
<evidence type="ECO:0000305" key="3"/>
<evidence type="ECO:0000312" key="4">
    <source>
        <dbReference type="EMBL" id="EGA91967.1"/>
    </source>
</evidence>
<organism>
    <name type="scientific">Clostridium symbiosum (strain WAL-14163)</name>
    <dbReference type="NCBI Taxonomy" id="742740"/>
    <lineage>
        <taxon>Bacteria</taxon>
        <taxon>Bacillati</taxon>
        <taxon>Bacillota</taxon>
        <taxon>Clostridia</taxon>
        <taxon>Lachnospirales</taxon>
        <taxon>Lachnospiraceae</taxon>
    </lineage>
</organism>
<gene>
    <name evidence="2" type="primary">bilS</name>
    <name evidence="4" type="ORF">HMPREF9474_04135</name>
</gene>
<sequence length="190" mass="20749">MKYAIVYSSRTGNTRQLAEKAFEVLGEREGGECVYFGEVPAGPLEGATAQRFREAEILYAGFWTDKGNADSGILSLFKELGKTDNMPPEIILFGTAGFGADQAYYDRIIQAAACELPESVKLKASFMCQGKMQQGVLERYRSMLEANPQDGRAKLMVDNYHAALTHPDGTDMAAFQHFLISSVPAAGMGE</sequence>
<protein>
    <recommendedName>
        <fullName evidence="3">Flavodoxin-like domain-containing protein BilS</fullName>
    </recommendedName>
    <alternativeName>
        <fullName evidence="2">Bilirubin reductase operon protein S</fullName>
    </alternativeName>
</protein>
<accession>E7GT90</accession>
<keyword id="KW-1185">Reference proteome</keyword>
<dbReference type="EMBL" id="ADLQ01000094">
    <property type="protein sequence ID" value="EGA91967.1"/>
    <property type="molecule type" value="Genomic_DNA"/>
</dbReference>
<dbReference type="RefSeq" id="WP_003504330.1">
    <property type="nucleotide sequence ID" value="NZ_GL834319.1"/>
</dbReference>
<dbReference type="SMR" id="E7GT90"/>
<dbReference type="STRING" id="1512.GCA_900049235_04467"/>
<dbReference type="GeneID" id="57971388"/>
<dbReference type="eggNOG" id="COG0716">
    <property type="taxonomic scope" value="Bacteria"/>
</dbReference>
<dbReference type="HOGENOM" id="CLU_098259_2_0_9"/>
<dbReference type="UniPathway" id="UPA00684"/>
<dbReference type="Proteomes" id="UP000002970">
    <property type="component" value="Unassembled WGS sequence"/>
</dbReference>
<dbReference type="GO" id="GO:0010181">
    <property type="term" value="F:FMN binding"/>
    <property type="evidence" value="ECO:0007669"/>
    <property type="project" value="InterPro"/>
</dbReference>
<dbReference type="GO" id="GO:0016651">
    <property type="term" value="F:oxidoreductase activity, acting on NAD(P)H"/>
    <property type="evidence" value="ECO:0007669"/>
    <property type="project" value="UniProtKB-ARBA"/>
</dbReference>
<dbReference type="Gene3D" id="3.40.50.360">
    <property type="match status" value="1"/>
</dbReference>
<dbReference type="InterPro" id="IPR054633">
    <property type="entry name" value="BilS"/>
</dbReference>
<dbReference type="InterPro" id="IPR008254">
    <property type="entry name" value="Flavodoxin/NO_synth"/>
</dbReference>
<dbReference type="InterPro" id="IPR029039">
    <property type="entry name" value="Flavoprotein-like_sf"/>
</dbReference>
<dbReference type="NCBIfam" id="NF045594">
    <property type="entry name" value="flavodox_BilS"/>
    <property type="match status" value="1"/>
</dbReference>
<dbReference type="Pfam" id="PF12641">
    <property type="entry name" value="Flavodoxin_3"/>
    <property type="match status" value="1"/>
</dbReference>
<dbReference type="SUPFAM" id="SSF52218">
    <property type="entry name" value="Flavoproteins"/>
    <property type="match status" value="1"/>
</dbReference>
<name>BILS_CLOS6</name>
<feature type="chain" id="PRO_0000460433" description="Flavodoxin-like domain-containing protein BilS">
    <location>
        <begin position="1"/>
        <end position="190"/>
    </location>
</feature>
<comment type="function">
    <text evidence="1">Together with BilR, catalyzes reduction of mesobilirubin and/or bilirubin to urobilinogen, a key step during heme degradation (PubMed:38172624). BilS is probably involved in electron transfer for the bilirubin reductase BilR (PubMed:38172624).</text>
</comment>
<comment type="pathway">
    <text evidence="1">Porphyrin-containing compound metabolism; protoheme degradation.</text>
</comment>
<proteinExistence type="predicted"/>